<proteinExistence type="evidence at transcript level"/>
<comment type="function">
    <text evidence="1">This protein binds directly to 23S ribosomal RNA and is located at the aminoacyl-tRNA binding site of the peptidyltransferase center.</text>
</comment>
<comment type="subunit">
    <text evidence="1">Part of the 50S ribosomal subunit.</text>
</comment>
<comment type="subcellular location">
    <subcellularLocation>
        <location evidence="1">Plastid</location>
        <location evidence="1">Chloroplast</location>
    </subcellularLocation>
</comment>
<comment type="similarity">
    <text evidence="3">Belongs to the universal ribosomal protein uL6 family.</text>
</comment>
<keyword id="KW-0150">Chloroplast</keyword>
<keyword id="KW-0934">Plastid</keyword>
<keyword id="KW-1185">Reference proteome</keyword>
<keyword id="KW-0687">Ribonucleoprotein</keyword>
<keyword id="KW-0689">Ribosomal protein</keyword>
<keyword id="KW-0694">RNA-binding</keyword>
<keyword id="KW-0699">rRNA-binding</keyword>
<keyword id="KW-0809">Transit peptide</keyword>
<sequence length="223" mass="24706">MASSLVSSFQPRSAFLGDRNVFKVSSTPFAQVGYSSKTIECKESRIGKQPIAVPSNVTIALEGQDLKVKGPLGELALTYPREVELTKEESGFLRVKKTVETRRANQMHGLFRTLTDNMVVGVSKGFEKKLILVGVGYRATVDGKELVLNLGFSHPVKMQIPDSLKVKVEENTRITVSGYDKSEIGQFAATVRKWRPPEPYKGKGVKYSDEIVRRKEGKAGKKK</sequence>
<reference key="1">
    <citation type="journal article" date="2000" name="Nature">
        <title>Sequence and analysis of chromosome 1 of the plant Arabidopsis thaliana.</title>
        <authorList>
            <person name="Theologis A."/>
            <person name="Ecker J.R."/>
            <person name="Palm C.J."/>
            <person name="Federspiel N.A."/>
            <person name="Kaul S."/>
            <person name="White O."/>
            <person name="Alonso J."/>
            <person name="Altafi H."/>
            <person name="Araujo R."/>
            <person name="Bowman C.L."/>
            <person name="Brooks S.Y."/>
            <person name="Buehler E."/>
            <person name="Chan A."/>
            <person name="Chao Q."/>
            <person name="Chen H."/>
            <person name="Cheuk R.F."/>
            <person name="Chin C.W."/>
            <person name="Chung M.K."/>
            <person name="Conn L."/>
            <person name="Conway A.B."/>
            <person name="Conway A.R."/>
            <person name="Creasy T.H."/>
            <person name="Dewar K."/>
            <person name="Dunn P."/>
            <person name="Etgu P."/>
            <person name="Feldblyum T.V."/>
            <person name="Feng J.-D."/>
            <person name="Fong B."/>
            <person name="Fujii C.Y."/>
            <person name="Gill J.E."/>
            <person name="Goldsmith A.D."/>
            <person name="Haas B."/>
            <person name="Hansen N.F."/>
            <person name="Hughes B."/>
            <person name="Huizar L."/>
            <person name="Hunter J.L."/>
            <person name="Jenkins J."/>
            <person name="Johnson-Hopson C."/>
            <person name="Khan S."/>
            <person name="Khaykin E."/>
            <person name="Kim C.J."/>
            <person name="Koo H.L."/>
            <person name="Kremenetskaia I."/>
            <person name="Kurtz D.B."/>
            <person name="Kwan A."/>
            <person name="Lam B."/>
            <person name="Langin-Hooper S."/>
            <person name="Lee A."/>
            <person name="Lee J.M."/>
            <person name="Lenz C.A."/>
            <person name="Li J.H."/>
            <person name="Li Y.-P."/>
            <person name="Lin X."/>
            <person name="Liu S.X."/>
            <person name="Liu Z.A."/>
            <person name="Luros J.S."/>
            <person name="Maiti R."/>
            <person name="Marziali A."/>
            <person name="Militscher J."/>
            <person name="Miranda M."/>
            <person name="Nguyen M."/>
            <person name="Nierman W.C."/>
            <person name="Osborne B.I."/>
            <person name="Pai G."/>
            <person name="Peterson J."/>
            <person name="Pham P.K."/>
            <person name="Rizzo M."/>
            <person name="Rooney T."/>
            <person name="Rowley D."/>
            <person name="Sakano H."/>
            <person name="Salzberg S.L."/>
            <person name="Schwartz J.R."/>
            <person name="Shinn P."/>
            <person name="Southwick A.M."/>
            <person name="Sun H."/>
            <person name="Tallon L.J."/>
            <person name="Tambunga G."/>
            <person name="Toriumi M.J."/>
            <person name="Town C.D."/>
            <person name="Utterback T."/>
            <person name="Van Aken S."/>
            <person name="Vaysberg M."/>
            <person name="Vysotskaia V.S."/>
            <person name="Walker M."/>
            <person name="Wu D."/>
            <person name="Yu G."/>
            <person name="Fraser C.M."/>
            <person name="Venter J.C."/>
            <person name="Davis R.W."/>
        </authorList>
    </citation>
    <scope>NUCLEOTIDE SEQUENCE [LARGE SCALE GENOMIC DNA]</scope>
    <source>
        <strain>cv. Columbia</strain>
    </source>
</reference>
<reference key="2">
    <citation type="journal article" date="2017" name="Plant J.">
        <title>Araport11: a complete reannotation of the Arabidopsis thaliana reference genome.</title>
        <authorList>
            <person name="Cheng C.Y."/>
            <person name="Krishnakumar V."/>
            <person name="Chan A.P."/>
            <person name="Thibaud-Nissen F."/>
            <person name="Schobel S."/>
            <person name="Town C.D."/>
        </authorList>
    </citation>
    <scope>GENOME REANNOTATION</scope>
    <source>
        <strain>cv. Columbia</strain>
    </source>
</reference>
<reference key="3">
    <citation type="journal article" date="2003" name="Science">
        <title>Empirical analysis of transcriptional activity in the Arabidopsis genome.</title>
        <authorList>
            <person name="Yamada K."/>
            <person name="Lim J."/>
            <person name="Dale J.M."/>
            <person name="Chen H."/>
            <person name="Shinn P."/>
            <person name="Palm C.J."/>
            <person name="Southwick A.M."/>
            <person name="Wu H.C."/>
            <person name="Kim C.J."/>
            <person name="Nguyen M."/>
            <person name="Pham P.K."/>
            <person name="Cheuk R.F."/>
            <person name="Karlin-Newmann G."/>
            <person name="Liu S.X."/>
            <person name="Lam B."/>
            <person name="Sakano H."/>
            <person name="Wu T."/>
            <person name="Yu G."/>
            <person name="Miranda M."/>
            <person name="Quach H.L."/>
            <person name="Tripp M."/>
            <person name="Chang C.H."/>
            <person name="Lee J.M."/>
            <person name="Toriumi M.J."/>
            <person name="Chan M.M."/>
            <person name="Tang C.C."/>
            <person name="Onodera C.S."/>
            <person name="Deng J.M."/>
            <person name="Akiyama K."/>
            <person name="Ansari Y."/>
            <person name="Arakawa T."/>
            <person name="Banh J."/>
            <person name="Banno F."/>
            <person name="Bowser L."/>
            <person name="Brooks S.Y."/>
            <person name="Carninci P."/>
            <person name="Chao Q."/>
            <person name="Choy N."/>
            <person name="Enju A."/>
            <person name="Goldsmith A.D."/>
            <person name="Gurjal M."/>
            <person name="Hansen N.F."/>
            <person name="Hayashizaki Y."/>
            <person name="Johnson-Hopson C."/>
            <person name="Hsuan V.W."/>
            <person name="Iida K."/>
            <person name="Karnes M."/>
            <person name="Khan S."/>
            <person name="Koesema E."/>
            <person name="Ishida J."/>
            <person name="Jiang P.X."/>
            <person name="Jones T."/>
            <person name="Kawai J."/>
            <person name="Kamiya A."/>
            <person name="Meyers C."/>
            <person name="Nakajima M."/>
            <person name="Narusaka M."/>
            <person name="Seki M."/>
            <person name="Sakurai T."/>
            <person name="Satou M."/>
            <person name="Tamse R."/>
            <person name="Vaysberg M."/>
            <person name="Wallender E.K."/>
            <person name="Wong C."/>
            <person name="Yamamura Y."/>
            <person name="Yuan S."/>
            <person name="Shinozaki K."/>
            <person name="Davis R.W."/>
            <person name="Theologis A."/>
            <person name="Ecker J.R."/>
        </authorList>
    </citation>
    <scope>NUCLEOTIDE SEQUENCE [LARGE SCALE MRNA]</scope>
    <source>
        <strain>cv. Columbia</strain>
    </source>
</reference>
<reference key="4">
    <citation type="submission" date="2002-03" db="EMBL/GenBank/DDBJ databases">
        <title>Full-length cDNA from Arabidopsis thaliana.</title>
        <authorList>
            <person name="Brover V.V."/>
            <person name="Troukhan M.E."/>
            <person name="Alexandrov N.A."/>
            <person name="Lu Y.-P."/>
            <person name="Flavell R.B."/>
            <person name="Feldmann K.A."/>
        </authorList>
    </citation>
    <scope>NUCLEOTIDE SEQUENCE [LARGE SCALE MRNA]</scope>
</reference>
<reference key="5">
    <citation type="journal article" date="2023" name="Plant Cell">
        <title>An updated nomenclature for plant ribosomal protein genes.</title>
        <authorList>
            <person name="Scarpin M.R."/>
            <person name="Busche M."/>
            <person name="Martinez R.E."/>
            <person name="Harper L.C."/>
            <person name="Reiser L."/>
            <person name="Szakonyi D."/>
            <person name="Merchante C."/>
            <person name="Lan T."/>
            <person name="Xiong W."/>
            <person name="Mo B."/>
            <person name="Tang G."/>
            <person name="Chen X."/>
            <person name="Bailey-Serres J."/>
            <person name="Browning K.S."/>
            <person name="Brunkard J.O."/>
        </authorList>
    </citation>
    <scope>NOMENCLATURE</scope>
</reference>
<gene>
    <name type="primary">RPL6</name>
    <name type="synonym">EMB2394</name>
    <name type="ordered locus">At1g05190</name>
    <name type="ORF">YUP8H12.20</name>
</gene>
<feature type="transit peptide" description="Chloroplast" evidence="1">
    <location>
        <begin position="1"/>
        <end position="41"/>
    </location>
</feature>
<feature type="chain" id="PRO_0000249858" description="Large ribosomal subunit protein uL6c">
    <location>
        <begin position="42"/>
        <end position="223"/>
    </location>
</feature>
<organism>
    <name type="scientific">Arabidopsis thaliana</name>
    <name type="common">Mouse-ear cress</name>
    <dbReference type="NCBI Taxonomy" id="3702"/>
    <lineage>
        <taxon>Eukaryota</taxon>
        <taxon>Viridiplantae</taxon>
        <taxon>Streptophyta</taxon>
        <taxon>Embryophyta</taxon>
        <taxon>Tracheophyta</taxon>
        <taxon>Spermatophyta</taxon>
        <taxon>Magnoliopsida</taxon>
        <taxon>eudicotyledons</taxon>
        <taxon>Gunneridae</taxon>
        <taxon>Pentapetalae</taxon>
        <taxon>rosids</taxon>
        <taxon>malvids</taxon>
        <taxon>Brassicales</taxon>
        <taxon>Brassicaceae</taxon>
        <taxon>Camelineae</taxon>
        <taxon>Arabidopsis</taxon>
    </lineage>
</organism>
<evidence type="ECO:0000250" key="1"/>
<evidence type="ECO:0000303" key="2">
    <source>
    </source>
</evidence>
<evidence type="ECO:0000305" key="3"/>
<protein>
    <recommendedName>
        <fullName evidence="2">Large ribosomal subunit protein uL6c</fullName>
    </recommendedName>
    <alternativeName>
        <fullName>50S ribosomal protein L6, chloroplastic</fullName>
    </alternativeName>
    <alternativeName>
        <fullName>Protein EMBRYO DEFECTIVE 2394</fullName>
    </alternativeName>
</protein>
<name>RK6_ARATH</name>
<dbReference type="EMBL" id="AC000098">
    <property type="protein sequence ID" value="AAB71459.1"/>
    <property type="molecule type" value="Genomic_DNA"/>
</dbReference>
<dbReference type="EMBL" id="CP002684">
    <property type="protein sequence ID" value="AEE27802.1"/>
    <property type="molecule type" value="Genomic_DNA"/>
</dbReference>
<dbReference type="EMBL" id="AY040077">
    <property type="protein sequence ID" value="AAK64135.1"/>
    <property type="molecule type" value="mRNA"/>
</dbReference>
<dbReference type="EMBL" id="AF360265">
    <property type="protein sequence ID" value="AAK25975.1"/>
    <property type="molecule type" value="mRNA"/>
</dbReference>
<dbReference type="EMBL" id="AY085715">
    <property type="protein sequence ID" value="AAM62933.1"/>
    <property type="molecule type" value="mRNA"/>
</dbReference>
<dbReference type="PIR" id="C86186">
    <property type="entry name" value="C86186"/>
</dbReference>
<dbReference type="RefSeq" id="NP_172011.1">
    <property type="nucleotide sequence ID" value="NM_100397.3"/>
</dbReference>
<dbReference type="SMR" id="O23049"/>
<dbReference type="BioGRID" id="24508">
    <property type="interactions" value="14"/>
</dbReference>
<dbReference type="FunCoup" id="O23049">
    <property type="interactions" value="1403"/>
</dbReference>
<dbReference type="IntAct" id="O23049">
    <property type="interactions" value="2"/>
</dbReference>
<dbReference type="STRING" id="3702.O23049"/>
<dbReference type="iPTMnet" id="O23049"/>
<dbReference type="PaxDb" id="3702-AT1G05190.1"/>
<dbReference type="ProteomicsDB" id="234810"/>
<dbReference type="EnsemblPlants" id="AT1G05190.1">
    <property type="protein sequence ID" value="AT1G05190.1"/>
    <property type="gene ID" value="AT1G05190"/>
</dbReference>
<dbReference type="GeneID" id="839273"/>
<dbReference type="Gramene" id="AT1G05190.1">
    <property type="protein sequence ID" value="AT1G05190.1"/>
    <property type="gene ID" value="AT1G05190"/>
</dbReference>
<dbReference type="KEGG" id="ath:AT1G05190"/>
<dbReference type="Araport" id="AT1G05190"/>
<dbReference type="TAIR" id="AT1G05190">
    <property type="gene designation" value="EMB2394"/>
</dbReference>
<dbReference type="eggNOG" id="KOG3254">
    <property type="taxonomic scope" value="Eukaryota"/>
</dbReference>
<dbReference type="HOGENOM" id="CLU_065464_1_1_1"/>
<dbReference type="InParanoid" id="O23049"/>
<dbReference type="OMA" id="RERHGLC"/>
<dbReference type="OrthoDB" id="540873at2759"/>
<dbReference type="PhylomeDB" id="O23049"/>
<dbReference type="CD-CODE" id="4299E36E">
    <property type="entry name" value="Nucleolus"/>
</dbReference>
<dbReference type="PRO" id="PR:O23049"/>
<dbReference type="Proteomes" id="UP000006548">
    <property type="component" value="Chromosome 1"/>
</dbReference>
<dbReference type="ExpressionAtlas" id="O23049">
    <property type="expression patterns" value="baseline and differential"/>
</dbReference>
<dbReference type="GO" id="GO:0009507">
    <property type="term" value="C:chloroplast"/>
    <property type="evidence" value="ECO:0007005"/>
    <property type="project" value="TAIR"/>
</dbReference>
<dbReference type="GO" id="GO:0009941">
    <property type="term" value="C:chloroplast envelope"/>
    <property type="evidence" value="ECO:0007005"/>
    <property type="project" value="TAIR"/>
</dbReference>
<dbReference type="GO" id="GO:0009570">
    <property type="term" value="C:chloroplast stroma"/>
    <property type="evidence" value="ECO:0007005"/>
    <property type="project" value="TAIR"/>
</dbReference>
<dbReference type="GO" id="GO:0005576">
    <property type="term" value="C:extracellular region"/>
    <property type="evidence" value="ECO:0007005"/>
    <property type="project" value="TAIR"/>
</dbReference>
<dbReference type="GO" id="GO:1990904">
    <property type="term" value="C:ribonucleoprotein complex"/>
    <property type="evidence" value="ECO:0007669"/>
    <property type="project" value="UniProtKB-KW"/>
</dbReference>
<dbReference type="GO" id="GO:0005840">
    <property type="term" value="C:ribosome"/>
    <property type="evidence" value="ECO:0007669"/>
    <property type="project" value="UniProtKB-KW"/>
</dbReference>
<dbReference type="GO" id="GO:0003729">
    <property type="term" value="F:mRNA binding"/>
    <property type="evidence" value="ECO:0000314"/>
    <property type="project" value="TAIR"/>
</dbReference>
<dbReference type="GO" id="GO:0019843">
    <property type="term" value="F:rRNA binding"/>
    <property type="evidence" value="ECO:0007669"/>
    <property type="project" value="UniProtKB-KW"/>
</dbReference>
<dbReference type="GO" id="GO:0003735">
    <property type="term" value="F:structural constituent of ribosome"/>
    <property type="evidence" value="ECO:0000315"/>
    <property type="project" value="TAIR"/>
</dbReference>
<dbReference type="GO" id="GO:0009793">
    <property type="term" value="P:embryo development ending in seed dormancy"/>
    <property type="evidence" value="ECO:0000315"/>
    <property type="project" value="TAIR"/>
</dbReference>
<dbReference type="GO" id="GO:0006412">
    <property type="term" value="P:translation"/>
    <property type="evidence" value="ECO:0007669"/>
    <property type="project" value="InterPro"/>
</dbReference>
<dbReference type="FunFam" id="3.90.930.12:FF:000001">
    <property type="entry name" value="50S ribosomal protein L6"/>
    <property type="match status" value="1"/>
</dbReference>
<dbReference type="FunFam" id="3.90.930.12:FF:000002">
    <property type="entry name" value="50S ribosomal protein L6"/>
    <property type="match status" value="1"/>
</dbReference>
<dbReference type="Gene3D" id="3.90.930.12">
    <property type="entry name" value="Ribosomal protein L6, alpha-beta domain"/>
    <property type="match status" value="2"/>
</dbReference>
<dbReference type="HAMAP" id="MF_01365_B">
    <property type="entry name" value="Ribosomal_uL6_B"/>
    <property type="match status" value="1"/>
</dbReference>
<dbReference type="InterPro" id="IPR000702">
    <property type="entry name" value="Ribosomal_uL6-like"/>
</dbReference>
<dbReference type="InterPro" id="IPR036789">
    <property type="entry name" value="Ribosomal_uL6-like_a/b-dom_sf"/>
</dbReference>
<dbReference type="InterPro" id="IPR020040">
    <property type="entry name" value="Ribosomal_uL6_a/b-dom"/>
</dbReference>
<dbReference type="InterPro" id="IPR019906">
    <property type="entry name" value="Ribosomal_uL6_bac-type"/>
</dbReference>
<dbReference type="InterPro" id="IPR002358">
    <property type="entry name" value="Ribosomal_uL6_CS"/>
</dbReference>
<dbReference type="NCBIfam" id="TIGR03654">
    <property type="entry name" value="L6_bact"/>
    <property type="match status" value="1"/>
</dbReference>
<dbReference type="PANTHER" id="PTHR11655">
    <property type="entry name" value="60S/50S RIBOSOMAL PROTEIN L6/L9"/>
    <property type="match status" value="1"/>
</dbReference>
<dbReference type="PANTHER" id="PTHR11655:SF14">
    <property type="entry name" value="LARGE RIBOSOMAL SUBUNIT PROTEIN UL6M"/>
    <property type="match status" value="1"/>
</dbReference>
<dbReference type="Pfam" id="PF00347">
    <property type="entry name" value="Ribosomal_L6"/>
    <property type="match status" value="2"/>
</dbReference>
<dbReference type="PRINTS" id="PR00059">
    <property type="entry name" value="RIBOSOMALL6"/>
</dbReference>
<dbReference type="SUPFAM" id="SSF56053">
    <property type="entry name" value="Ribosomal protein L6"/>
    <property type="match status" value="2"/>
</dbReference>
<dbReference type="PROSITE" id="PS00525">
    <property type="entry name" value="RIBOSOMAL_L6_1"/>
    <property type="match status" value="1"/>
</dbReference>
<accession>O23049</accession>